<feature type="chain" id="PRO_1000020696" description="Glycerol kinase">
    <location>
        <begin position="1"/>
        <end position="504"/>
    </location>
</feature>
<feature type="binding site" evidence="1">
    <location>
        <position position="12"/>
    </location>
    <ligand>
        <name>ADP</name>
        <dbReference type="ChEBI" id="CHEBI:456216"/>
    </ligand>
</feature>
<feature type="binding site" evidence="1">
    <location>
        <position position="12"/>
    </location>
    <ligand>
        <name>ATP</name>
        <dbReference type="ChEBI" id="CHEBI:30616"/>
    </ligand>
</feature>
<feature type="binding site" evidence="1">
    <location>
        <position position="12"/>
    </location>
    <ligand>
        <name>sn-glycerol 3-phosphate</name>
        <dbReference type="ChEBI" id="CHEBI:57597"/>
    </ligand>
</feature>
<feature type="binding site" evidence="1">
    <location>
        <position position="13"/>
    </location>
    <ligand>
        <name>ATP</name>
        <dbReference type="ChEBI" id="CHEBI:30616"/>
    </ligand>
</feature>
<feature type="binding site" evidence="1">
    <location>
        <position position="14"/>
    </location>
    <ligand>
        <name>ATP</name>
        <dbReference type="ChEBI" id="CHEBI:30616"/>
    </ligand>
</feature>
<feature type="binding site" evidence="1">
    <location>
        <position position="16"/>
    </location>
    <ligand>
        <name>ADP</name>
        <dbReference type="ChEBI" id="CHEBI:456216"/>
    </ligand>
</feature>
<feature type="binding site" evidence="1">
    <location>
        <position position="82"/>
    </location>
    <ligand>
        <name>glycerol</name>
        <dbReference type="ChEBI" id="CHEBI:17754"/>
    </ligand>
</feature>
<feature type="binding site" evidence="1">
    <location>
        <position position="82"/>
    </location>
    <ligand>
        <name>sn-glycerol 3-phosphate</name>
        <dbReference type="ChEBI" id="CHEBI:57597"/>
    </ligand>
</feature>
<feature type="binding site" evidence="1">
    <location>
        <position position="83"/>
    </location>
    <ligand>
        <name>glycerol</name>
        <dbReference type="ChEBI" id="CHEBI:17754"/>
    </ligand>
</feature>
<feature type="binding site" evidence="1">
    <location>
        <position position="83"/>
    </location>
    <ligand>
        <name>sn-glycerol 3-phosphate</name>
        <dbReference type="ChEBI" id="CHEBI:57597"/>
    </ligand>
</feature>
<feature type="binding site" evidence="1">
    <location>
        <position position="134"/>
    </location>
    <ligand>
        <name>glycerol</name>
        <dbReference type="ChEBI" id="CHEBI:17754"/>
    </ligand>
</feature>
<feature type="binding site" evidence="1">
    <location>
        <position position="134"/>
    </location>
    <ligand>
        <name>sn-glycerol 3-phosphate</name>
        <dbReference type="ChEBI" id="CHEBI:57597"/>
    </ligand>
</feature>
<feature type="binding site" evidence="1">
    <location>
        <position position="246"/>
    </location>
    <ligand>
        <name>glycerol</name>
        <dbReference type="ChEBI" id="CHEBI:17754"/>
    </ligand>
</feature>
<feature type="binding site" evidence="1">
    <location>
        <position position="246"/>
    </location>
    <ligand>
        <name>sn-glycerol 3-phosphate</name>
        <dbReference type="ChEBI" id="CHEBI:57597"/>
    </ligand>
</feature>
<feature type="binding site" evidence="1">
    <location>
        <position position="247"/>
    </location>
    <ligand>
        <name>glycerol</name>
        <dbReference type="ChEBI" id="CHEBI:17754"/>
    </ligand>
</feature>
<feature type="binding site" evidence="1">
    <location>
        <position position="268"/>
    </location>
    <ligand>
        <name>ADP</name>
        <dbReference type="ChEBI" id="CHEBI:456216"/>
    </ligand>
</feature>
<feature type="binding site" evidence="1">
    <location>
        <position position="268"/>
    </location>
    <ligand>
        <name>ATP</name>
        <dbReference type="ChEBI" id="CHEBI:30616"/>
    </ligand>
</feature>
<feature type="binding site" evidence="1">
    <location>
        <position position="312"/>
    </location>
    <ligand>
        <name>ADP</name>
        <dbReference type="ChEBI" id="CHEBI:456216"/>
    </ligand>
</feature>
<feature type="binding site" evidence="1">
    <location>
        <position position="312"/>
    </location>
    <ligand>
        <name>ATP</name>
        <dbReference type="ChEBI" id="CHEBI:30616"/>
    </ligand>
</feature>
<feature type="binding site" evidence="1">
    <location>
        <position position="316"/>
    </location>
    <ligand>
        <name>ATP</name>
        <dbReference type="ChEBI" id="CHEBI:30616"/>
    </ligand>
</feature>
<feature type="binding site" evidence="1">
    <location>
        <position position="413"/>
    </location>
    <ligand>
        <name>ADP</name>
        <dbReference type="ChEBI" id="CHEBI:456216"/>
    </ligand>
</feature>
<feature type="binding site" evidence="1">
    <location>
        <position position="413"/>
    </location>
    <ligand>
        <name>ATP</name>
        <dbReference type="ChEBI" id="CHEBI:30616"/>
    </ligand>
</feature>
<feature type="binding site" evidence="1">
    <location>
        <position position="417"/>
    </location>
    <ligand>
        <name>ADP</name>
        <dbReference type="ChEBI" id="CHEBI:456216"/>
    </ligand>
</feature>
<comment type="function">
    <text evidence="1">Key enzyme in the regulation of glycerol uptake and metabolism. Catalyzes the phosphorylation of glycerol to yield sn-glycerol 3-phosphate.</text>
</comment>
<comment type="catalytic activity">
    <reaction evidence="1">
        <text>glycerol + ATP = sn-glycerol 3-phosphate + ADP + H(+)</text>
        <dbReference type="Rhea" id="RHEA:21644"/>
        <dbReference type="ChEBI" id="CHEBI:15378"/>
        <dbReference type="ChEBI" id="CHEBI:17754"/>
        <dbReference type="ChEBI" id="CHEBI:30616"/>
        <dbReference type="ChEBI" id="CHEBI:57597"/>
        <dbReference type="ChEBI" id="CHEBI:456216"/>
        <dbReference type="EC" id="2.7.1.30"/>
    </reaction>
</comment>
<comment type="activity regulation">
    <text evidence="1">Inhibited by fructose 1,6-bisphosphate (FBP).</text>
</comment>
<comment type="pathway">
    <text evidence="1">Polyol metabolism; glycerol degradation via glycerol kinase pathway; sn-glycerol 3-phosphate from glycerol: step 1/1.</text>
</comment>
<comment type="similarity">
    <text evidence="1">Belongs to the FGGY kinase family.</text>
</comment>
<reference key="1">
    <citation type="journal article" date="2006" name="PLoS Genet.">
        <title>Secrets of soil survival revealed by the genome sequence of Arthrobacter aurescens TC1.</title>
        <authorList>
            <person name="Mongodin E.F."/>
            <person name="Shapir N."/>
            <person name="Daugherty S.C."/>
            <person name="DeBoy R.T."/>
            <person name="Emerson J.B."/>
            <person name="Shvartzbeyn A."/>
            <person name="Radune D."/>
            <person name="Vamathevan J."/>
            <person name="Riggs F."/>
            <person name="Grinberg V."/>
            <person name="Khouri H.M."/>
            <person name="Wackett L.P."/>
            <person name="Nelson K.E."/>
            <person name="Sadowsky M.J."/>
        </authorList>
    </citation>
    <scope>NUCLEOTIDE SEQUENCE [LARGE SCALE GENOMIC DNA]</scope>
    <source>
        <strain>TC1</strain>
    </source>
</reference>
<proteinExistence type="inferred from homology"/>
<evidence type="ECO:0000255" key="1">
    <source>
        <dbReference type="HAMAP-Rule" id="MF_00186"/>
    </source>
</evidence>
<name>GLPK_PAEAT</name>
<protein>
    <recommendedName>
        <fullName evidence="1">Glycerol kinase</fullName>
        <ecNumber evidence="1">2.7.1.30</ecNumber>
    </recommendedName>
    <alternativeName>
        <fullName evidence="1">ATP:glycerol 3-phosphotransferase</fullName>
    </alternativeName>
    <alternativeName>
        <fullName evidence="1">Glycerokinase</fullName>
        <shortName evidence="1">GK</shortName>
    </alternativeName>
</protein>
<keyword id="KW-0067">ATP-binding</keyword>
<keyword id="KW-0319">Glycerol metabolism</keyword>
<keyword id="KW-0418">Kinase</keyword>
<keyword id="KW-0547">Nucleotide-binding</keyword>
<keyword id="KW-0808">Transferase</keyword>
<accession>A1R6X6</accession>
<sequence length="504" mass="54809">MNQYVIAIDQGTTSSRAIVFDHAGNIVSTGQMEHEQIFPQAGWVEHNPAEIWNNTREVIGSALSKANLTRHDIAAVGITNQRETAVVWDKNTGEAVYNAIVWQDTRTQSIVDELAQDGGPERFKQKVGLPLATYFSGTKIKWILDNVDGARERAEAGDLLFGNTDAWVLWNLTGGVDGGVHVTDVTNASRTLFMDLETLQWDQEILDIFGVPASMMPAIKSSSEVYGHVHTSQLLRETPVAGILGDQQAATFGQAAFQPGEAKNTYGTGCFLIFNTGEEIVHSKNGLLTTLGYKLGDAKPHYALEGSIAVTGSLIQWLRDNLGMISSAPEVEELAAGVRDNGGVYIVPAFSGLFAPYWRADARGAIVGLTRFANKGHIARAALEATAFQTREVLDAVNADSGVPLTELKVDGGMVANEALMQFQADILGVPVVRPKVVETTALGAAYAAGLAVGFWKDLGELSANWNEDKRWEPQLPAEEQERQLRLWKKAVTKSMDWVDEDVK</sequence>
<dbReference type="EC" id="2.7.1.30" evidence="1"/>
<dbReference type="EMBL" id="CP000474">
    <property type="protein sequence ID" value="ABM08827.1"/>
    <property type="molecule type" value="Genomic_DNA"/>
</dbReference>
<dbReference type="RefSeq" id="WP_011774932.1">
    <property type="nucleotide sequence ID" value="NC_008711.1"/>
</dbReference>
<dbReference type="SMR" id="A1R6X6"/>
<dbReference type="STRING" id="290340.AAur_2247"/>
<dbReference type="KEGG" id="aau:AAur_2247"/>
<dbReference type="eggNOG" id="COG0554">
    <property type="taxonomic scope" value="Bacteria"/>
</dbReference>
<dbReference type="HOGENOM" id="CLU_009281_2_3_11"/>
<dbReference type="OrthoDB" id="9805576at2"/>
<dbReference type="UniPathway" id="UPA00618">
    <property type="reaction ID" value="UER00672"/>
</dbReference>
<dbReference type="Proteomes" id="UP000000637">
    <property type="component" value="Chromosome"/>
</dbReference>
<dbReference type="GO" id="GO:0005829">
    <property type="term" value="C:cytosol"/>
    <property type="evidence" value="ECO:0007669"/>
    <property type="project" value="TreeGrafter"/>
</dbReference>
<dbReference type="GO" id="GO:0005524">
    <property type="term" value="F:ATP binding"/>
    <property type="evidence" value="ECO:0007669"/>
    <property type="project" value="UniProtKB-UniRule"/>
</dbReference>
<dbReference type="GO" id="GO:0004370">
    <property type="term" value="F:glycerol kinase activity"/>
    <property type="evidence" value="ECO:0000250"/>
    <property type="project" value="UniProtKB"/>
</dbReference>
<dbReference type="GO" id="GO:0019563">
    <property type="term" value="P:glycerol catabolic process"/>
    <property type="evidence" value="ECO:0007669"/>
    <property type="project" value="UniProtKB-UniRule"/>
</dbReference>
<dbReference type="GO" id="GO:0006071">
    <property type="term" value="P:glycerol metabolic process"/>
    <property type="evidence" value="ECO:0000250"/>
    <property type="project" value="UniProtKB"/>
</dbReference>
<dbReference type="GO" id="GO:0006072">
    <property type="term" value="P:glycerol-3-phosphate metabolic process"/>
    <property type="evidence" value="ECO:0007669"/>
    <property type="project" value="InterPro"/>
</dbReference>
<dbReference type="CDD" id="cd07769">
    <property type="entry name" value="ASKHA_NBD_FGGY_GK"/>
    <property type="match status" value="1"/>
</dbReference>
<dbReference type="FunFam" id="3.30.420.40:FF:000007">
    <property type="entry name" value="Glycerol kinase"/>
    <property type="match status" value="1"/>
</dbReference>
<dbReference type="FunFam" id="3.30.420.40:FF:000008">
    <property type="entry name" value="Glycerol kinase"/>
    <property type="match status" value="1"/>
</dbReference>
<dbReference type="Gene3D" id="3.30.420.40">
    <property type="match status" value="2"/>
</dbReference>
<dbReference type="HAMAP" id="MF_00186">
    <property type="entry name" value="Glycerol_kin"/>
    <property type="match status" value="1"/>
</dbReference>
<dbReference type="InterPro" id="IPR043129">
    <property type="entry name" value="ATPase_NBD"/>
</dbReference>
<dbReference type="InterPro" id="IPR000577">
    <property type="entry name" value="Carb_kinase_FGGY"/>
</dbReference>
<dbReference type="InterPro" id="IPR018483">
    <property type="entry name" value="Carb_kinase_FGGY_CS"/>
</dbReference>
<dbReference type="InterPro" id="IPR018485">
    <property type="entry name" value="FGGY_C"/>
</dbReference>
<dbReference type="InterPro" id="IPR018484">
    <property type="entry name" value="FGGY_N"/>
</dbReference>
<dbReference type="InterPro" id="IPR005999">
    <property type="entry name" value="Glycerol_kin"/>
</dbReference>
<dbReference type="NCBIfam" id="TIGR01311">
    <property type="entry name" value="glycerol_kin"/>
    <property type="match status" value="1"/>
</dbReference>
<dbReference type="NCBIfam" id="NF000756">
    <property type="entry name" value="PRK00047.1"/>
    <property type="match status" value="1"/>
</dbReference>
<dbReference type="PANTHER" id="PTHR10196:SF69">
    <property type="entry name" value="GLYCEROL KINASE"/>
    <property type="match status" value="1"/>
</dbReference>
<dbReference type="PANTHER" id="PTHR10196">
    <property type="entry name" value="SUGAR KINASE"/>
    <property type="match status" value="1"/>
</dbReference>
<dbReference type="Pfam" id="PF02782">
    <property type="entry name" value="FGGY_C"/>
    <property type="match status" value="1"/>
</dbReference>
<dbReference type="Pfam" id="PF00370">
    <property type="entry name" value="FGGY_N"/>
    <property type="match status" value="1"/>
</dbReference>
<dbReference type="PIRSF" id="PIRSF000538">
    <property type="entry name" value="GlpK"/>
    <property type="match status" value="1"/>
</dbReference>
<dbReference type="SUPFAM" id="SSF53067">
    <property type="entry name" value="Actin-like ATPase domain"/>
    <property type="match status" value="2"/>
</dbReference>
<dbReference type="PROSITE" id="PS00933">
    <property type="entry name" value="FGGY_KINASES_1"/>
    <property type="match status" value="1"/>
</dbReference>
<dbReference type="PROSITE" id="PS00445">
    <property type="entry name" value="FGGY_KINASES_2"/>
    <property type="match status" value="1"/>
</dbReference>
<gene>
    <name evidence="1" type="primary">glpK</name>
    <name type="ordered locus">AAur_2247</name>
</gene>
<organism>
    <name type="scientific">Paenarthrobacter aurescens (strain TC1)</name>
    <dbReference type="NCBI Taxonomy" id="290340"/>
    <lineage>
        <taxon>Bacteria</taxon>
        <taxon>Bacillati</taxon>
        <taxon>Actinomycetota</taxon>
        <taxon>Actinomycetes</taxon>
        <taxon>Micrococcales</taxon>
        <taxon>Micrococcaceae</taxon>
        <taxon>Paenarthrobacter</taxon>
    </lineage>
</organism>